<feature type="chain" id="PRO_1000185021" description="Putative regulatory protein CTN_0877">
    <location>
        <begin position="1"/>
        <end position="92"/>
    </location>
</feature>
<dbReference type="EMBL" id="CP000916">
    <property type="protein sequence ID" value="ACM23053.1"/>
    <property type="molecule type" value="Genomic_DNA"/>
</dbReference>
<dbReference type="RefSeq" id="WP_015919370.1">
    <property type="nucleotide sequence ID" value="NC_011978.1"/>
</dbReference>
<dbReference type="SMR" id="B9K7X0"/>
<dbReference type="STRING" id="309803.CTN_0877"/>
<dbReference type="KEGG" id="tna:CTN_0877"/>
<dbReference type="eggNOG" id="COG2052">
    <property type="taxonomic scope" value="Bacteria"/>
</dbReference>
<dbReference type="HOGENOM" id="CLU_165326_0_0_0"/>
<dbReference type="Proteomes" id="UP000000445">
    <property type="component" value="Chromosome"/>
</dbReference>
<dbReference type="HAMAP" id="MF_01503">
    <property type="entry name" value="RemA"/>
    <property type="match status" value="1"/>
</dbReference>
<dbReference type="InterPro" id="IPR007169">
    <property type="entry name" value="RemA-like"/>
</dbReference>
<dbReference type="NCBIfam" id="NF003315">
    <property type="entry name" value="PRK04323.1"/>
    <property type="match status" value="1"/>
</dbReference>
<dbReference type="PANTHER" id="PTHR38449:SF1">
    <property type="entry name" value="REGULATORY PROTEIN SSL2874-RELATED"/>
    <property type="match status" value="1"/>
</dbReference>
<dbReference type="PANTHER" id="PTHR38449">
    <property type="entry name" value="REGULATORY PROTEIN TM_1690-RELATED"/>
    <property type="match status" value="1"/>
</dbReference>
<dbReference type="Pfam" id="PF04025">
    <property type="entry name" value="RemA-like"/>
    <property type="match status" value="1"/>
</dbReference>
<gene>
    <name type="ordered locus">CTN_0877</name>
</gene>
<sequence length="92" mass="10381">MYGLINIGFGNVIAGDRVIAIVNPESSPLKRMKDEAKIEGKLIDATYGRKTRSIIITDSNHIILSAIQPETIAQRFMENFYEIEKTLREGKK</sequence>
<accession>B9K7X0</accession>
<proteinExistence type="inferred from homology"/>
<evidence type="ECO:0000255" key="1">
    <source>
        <dbReference type="HAMAP-Rule" id="MF_01503"/>
    </source>
</evidence>
<protein>
    <recommendedName>
        <fullName evidence="1">Putative regulatory protein CTN_0877</fullName>
    </recommendedName>
</protein>
<organism>
    <name type="scientific">Thermotoga neapolitana (strain ATCC 49049 / DSM 4359 / NBRC 107923 / NS-E)</name>
    <dbReference type="NCBI Taxonomy" id="309803"/>
    <lineage>
        <taxon>Bacteria</taxon>
        <taxon>Thermotogati</taxon>
        <taxon>Thermotogota</taxon>
        <taxon>Thermotogae</taxon>
        <taxon>Thermotogales</taxon>
        <taxon>Thermotogaceae</taxon>
        <taxon>Thermotoga</taxon>
    </lineage>
</organism>
<comment type="similarity">
    <text evidence="1">Belongs to the RemA family.</text>
</comment>
<reference key="1">
    <citation type="submission" date="2007-11" db="EMBL/GenBank/DDBJ databases">
        <title>The genome sequence of the hyperthermophilic bacterium Thermotoga neapolitana.</title>
        <authorList>
            <person name="Lim S.K."/>
            <person name="Kim J.S."/>
            <person name="Cha S.H."/>
            <person name="Park B.C."/>
            <person name="Lee D.S."/>
            <person name="Tae H.S."/>
            <person name="Kim S.-J."/>
            <person name="Kim J.J."/>
            <person name="Park K.J."/>
            <person name="Lee S.Y."/>
        </authorList>
    </citation>
    <scope>NUCLEOTIDE SEQUENCE [LARGE SCALE GENOMIC DNA]</scope>
    <source>
        <strain>ATCC 49049 / DSM 4359 / NBRC 107923 / NS-E</strain>
    </source>
</reference>
<name>Y877_THENN</name>